<feature type="chain" id="PRO_0000187049" description="Calcium-activated potassium channel subunit beta-1">
    <location>
        <begin position="1"/>
        <end position="191"/>
    </location>
</feature>
<feature type="topological domain" description="Cytoplasmic" evidence="2">
    <location>
        <begin position="1"/>
        <end position="18"/>
    </location>
</feature>
<feature type="transmembrane region" description="Helical; Name=1" evidence="2">
    <location>
        <begin position="19"/>
        <end position="39"/>
    </location>
</feature>
<feature type="topological domain" description="Extracellular" evidence="2">
    <location>
        <begin position="40"/>
        <end position="155"/>
    </location>
</feature>
<feature type="transmembrane region" description="Helical; Name=2" evidence="2">
    <location>
        <begin position="156"/>
        <end position="176"/>
    </location>
</feature>
<feature type="topological domain" description="Cytoplasmic" evidence="2">
    <location>
        <begin position="177"/>
        <end position="191"/>
    </location>
</feature>
<feature type="glycosylation site" description="N-linked (GlcNAc...) asparagine" evidence="2">
    <location>
        <position position="80"/>
    </location>
</feature>
<feature type="glycosylation site" description="N-linked (GlcNAc...) asparagine" evidence="2">
    <location>
        <position position="142"/>
    </location>
</feature>
<feature type="splice variant" id="VSP_009824" description="In isoform 3." evidence="4">
    <location>
        <begin position="103"/>
        <end position="122"/>
    </location>
</feature>
<feature type="splice variant" id="VSP_009825" description="In isoform 2 and isoform 3." evidence="4">
    <original>VRANFYKHHNFYCFSAPQVNETSV</original>
    <variation>LRSRPISSAQQHGVTRNGRGPGQA</variation>
    <location>
        <begin position="123"/>
        <end position="146"/>
    </location>
</feature>
<feature type="splice variant" id="VSP_009826" description="In isoform 2 and isoform 3." evidence="4">
    <location>
        <begin position="147"/>
        <end position="191"/>
    </location>
</feature>
<feature type="sequence conflict" description="In Ref. 2; AAB38413." evidence="5" ref="2">
    <original>T</original>
    <variation>A</variation>
    <location>
        <position position="14"/>
    </location>
</feature>
<feature type="sequence conflict" description="In Ref. 2; AAB38413." evidence="5" ref="2">
    <original>AIT</original>
    <variation>VVA</variation>
    <location>
        <begin position="28"/>
        <end position="30"/>
    </location>
</feature>
<feature type="sequence conflict" description="In Ref. 2; AAB38413." evidence="5" ref="2">
    <original>V</original>
    <variation>M</variation>
    <location>
        <position position="38"/>
    </location>
</feature>
<feature type="sequence conflict" description="In Ref. 2; AAB38413." evidence="5" ref="2">
    <original>VETNIK</original>
    <variation>IESNIR</variation>
    <location>
        <begin position="56"/>
        <end position="61"/>
    </location>
</feature>
<feature type="sequence conflict" description="In Ref. 2; AAB38413." evidence="5" ref="2">
    <original>R</original>
    <variation>K</variation>
    <location>
        <position position="69"/>
    </location>
</feature>
<feature type="sequence conflict" description="In Ref. 2; AAB38413." evidence="5" ref="2">
    <original>M</original>
    <variation>V</variation>
    <location>
        <position position="89"/>
    </location>
</feature>
<feature type="sequence conflict" description="In Ref. 1; AAD11548." evidence="5" ref="1">
    <original>Y</original>
    <variation>H</variation>
    <location>
        <position position="105"/>
    </location>
</feature>
<feature type="sequence conflict" description="In Ref. 2; AAB38413." evidence="5" ref="2">
    <original>NLD</original>
    <variation>SLE</variation>
    <location>
        <begin position="109"/>
        <end position="111"/>
    </location>
</feature>
<feature type="sequence conflict" description="In Ref. 2; AAB38413." evidence="5" ref="2">
    <original>TALVDVK</original>
    <variation>VARADVE</variation>
    <location>
        <begin position="115"/>
        <end position="121"/>
    </location>
</feature>
<feature type="sequence conflict" description="In Ref. 2; AAB38413." evidence="5" ref="2">
    <original>A</original>
    <variation>T</variation>
    <location>
        <position position="125"/>
    </location>
</feature>
<feature type="sequence conflict" description="In Ref. 2; AAB38413." evidence="5" ref="2">
    <original>YKHHN</original>
    <variation>HEHRI</variation>
    <location>
        <begin position="128"/>
        <end position="132"/>
    </location>
</feature>
<feature type="sequence conflict" description="In Ref. 2; AAB38413." evidence="5" ref="2">
    <original>APQV</original>
    <variation>TTRE</variation>
    <location>
        <begin position="138"/>
        <end position="141"/>
    </location>
</feature>
<feature type="sequence conflict" description="In Ref. 2; AAB38413." evidence="5" ref="2">
    <original>SVVYQ</original>
    <variation>TVLYR</variation>
    <location>
        <begin position="145"/>
        <end position="149"/>
    </location>
</feature>
<feature type="sequence conflict" description="In Ref. 2; AAB38413." evidence="5" ref="2">
    <original>I</original>
    <variation>T</variation>
    <location>
        <position position="156"/>
    </location>
</feature>
<feature type="sequence conflict" description="In Ref. 2; AAB38413." evidence="5" ref="2">
    <original>F</original>
    <variation>L</variation>
    <location>
        <position position="161"/>
    </location>
</feature>
<feature type="sequence conflict" description="In Ref. 1; AAD11548." evidence="5" ref="1">
    <original>M</original>
    <variation>I</variation>
    <location>
        <position position="177"/>
    </location>
</feature>
<feature type="sequence conflict" description="In Ref. 2; AAB38413." evidence="5" ref="2">
    <original>LNR</original>
    <variation>INQ</variation>
    <location>
        <begin position="180"/>
        <end position="182"/>
    </location>
</feature>
<feature type="sequence conflict" description="In Ref. 1; AAD11548." evidence="5" ref="1">
    <original>VL</original>
    <variation>IP</variation>
    <location>
        <begin position="186"/>
        <end position="187"/>
    </location>
</feature>
<feature type="sequence conflict" description="In Ref. 2; AAB38413." evidence="5" ref="2">
    <original>V</original>
    <variation>I</variation>
    <location>
        <position position="186"/>
    </location>
</feature>
<feature type="sequence conflict" description="In Ref. 1 and 2." evidence="5" ref="1 2">
    <original>K</original>
    <variation>R</variation>
    <location>
        <position position="191"/>
    </location>
</feature>
<proteinExistence type="evidence at transcript level"/>
<dbReference type="EMBL" id="U54498">
    <property type="protein sequence ID" value="AAD11548.1"/>
    <property type="molecule type" value="mRNA"/>
</dbReference>
<dbReference type="EMBL" id="AF020712">
    <property type="protein sequence ID" value="AAD11858.1"/>
    <property type="molecule type" value="mRNA"/>
</dbReference>
<dbReference type="EMBL" id="U79661">
    <property type="protein sequence ID" value="AAB38413.1"/>
    <property type="molecule type" value="mRNA"/>
</dbReference>
<dbReference type="EMBL" id="U40602">
    <property type="protein sequence ID" value="AAB96355.1"/>
    <property type="molecule type" value="mRNA"/>
</dbReference>
<dbReference type="EMBL" id="AB010963">
    <property type="protein sequence ID" value="BAA33448.1"/>
    <property type="molecule type" value="mRNA"/>
</dbReference>
<dbReference type="EMBL" id="AB050745">
    <property type="protein sequence ID" value="BAB17678.1"/>
    <property type="molecule type" value="mRNA"/>
</dbReference>
<dbReference type="RefSeq" id="NP_062146.1">
    <molecule id="P97678-1"/>
    <property type="nucleotide sequence ID" value="NM_019273.1"/>
</dbReference>
<dbReference type="RefSeq" id="XP_006246151.1">
    <molecule id="P97678-1"/>
    <property type="nucleotide sequence ID" value="XM_006246089.5"/>
</dbReference>
<dbReference type="RefSeq" id="XP_008765785.1">
    <property type="nucleotide sequence ID" value="XM_008767563.2"/>
</dbReference>
<dbReference type="RefSeq" id="XP_008765786.1">
    <property type="nucleotide sequence ID" value="XM_008767564.2"/>
</dbReference>
<dbReference type="RefSeq" id="XP_038941725.1">
    <molecule id="P97678-2"/>
    <property type="nucleotide sequence ID" value="XM_039085797.2"/>
</dbReference>
<dbReference type="RefSeq" id="XP_063124914.1">
    <molecule id="P97678-2"/>
    <property type="nucleotide sequence ID" value="XM_063268844.1"/>
</dbReference>
<dbReference type="SMR" id="P97678"/>
<dbReference type="BioGRID" id="248358">
    <property type="interactions" value="1"/>
</dbReference>
<dbReference type="FunCoup" id="P97678">
    <property type="interactions" value="3"/>
</dbReference>
<dbReference type="STRING" id="10116.ENSRNOP00000007393"/>
<dbReference type="BindingDB" id="P97678"/>
<dbReference type="GlyCosmos" id="P97678">
    <property type="glycosylation" value="2 sites, No reported glycans"/>
</dbReference>
<dbReference type="GlyGen" id="P97678">
    <property type="glycosylation" value="2 sites"/>
</dbReference>
<dbReference type="PhosphoSitePlus" id="P97678"/>
<dbReference type="PaxDb" id="10116-ENSRNOP00000007408"/>
<dbReference type="Ensembl" id="ENSRNOT00000007408.7">
    <molecule id="P97678-1"/>
    <property type="protein sequence ID" value="ENSRNOP00000007408.3"/>
    <property type="gene ID" value="ENSRNOG00000005465.7"/>
</dbReference>
<dbReference type="Ensembl" id="ENSRNOT00000090659.2">
    <molecule id="P97678-2"/>
    <property type="protein sequence ID" value="ENSRNOP00000071161.2"/>
    <property type="gene ID" value="ENSRNOG00000005465.7"/>
</dbReference>
<dbReference type="GeneID" id="29747"/>
<dbReference type="KEGG" id="rno:29747"/>
<dbReference type="UCSC" id="RGD:2961">
    <molecule id="P97678-1"/>
    <property type="organism name" value="rat"/>
</dbReference>
<dbReference type="AGR" id="RGD:2961"/>
<dbReference type="CTD" id="3779"/>
<dbReference type="RGD" id="2961">
    <property type="gene designation" value="Kcnmb1"/>
</dbReference>
<dbReference type="eggNOG" id="ENOG502RZA0">
    <property type="taxonomic scope" value="Eukaryota"/>
</dbReference>
<dbReference type="GeneTree" id="ENSGT00950000183039"/>
<dbReference type="InParanoid" id="P97678"/>
<dbReference type="OMA" id="PYPCLQV"/>
<dbReference type="OrthoDB" id="5962477at2759"/>
<dbReference type="PhylomeDB" id="P97678"/>
<dbReference type="TreeFam" id="TF328589"/>
<dbReference type="Reactome" id="R-RNO-1296052">
    <property type="pathway name" value="Ca2+ activated K+ channels"/>
</dbReference>
<dbReference type="PRO" id="PR:P97678"/>
<dbReference type="Proteomes" id="UP000002494">
    <property type="component" value="Chromosome 10"/>
</dbReference>
<dbReference type="Bgee" id="ENSRNOG00000005465">
    <property type="expression patterns" value="Expressed in colon and 16 other cell types or tissues"/>
</dbReference>
<dbReference type="GO" id="GO:0016020">
    <property type="term" value="C:membrane"/>
    <property type="evidence" value="ECO:0000266"/>
    <property type="project" value="RGD"/>
</dbReference>
<dbReference type="GO" id="GO:0005886">
    <property type="term" value="C:plasma membrane"/>
    <property type="evidence" value="ECO:0000304"/>
    <property type="project" value="Reactome"/>
</dbReference>
<dbReference type="GO" id="GO:0008076">
    <property type="term" value="C:voltage-gated potassium channel complex"/>
    <property type="evidence" value="ECO:0000266"/>
    <property type="project" value="RGD"/>
</dbReference>
<dbReference type="GO" id="GO:0015269">
    <property type="term" value="F:calcium-activated potassium channel activity"/>
    <property type="evidence" value="ECO:0000266"/>
    <property type="project" value="RGD"/>
</dbReference>
<dbReference type="GO" id="GO:0015459">
    <property type="term" value="F:potassium channel regulator activity"/>
    <property type="evidence" value="ECO:0000314"/>
    <property type="project" value="RGD"/>
</dbReference>
<dbReference type="GO" id="GO:1903413">
    <property type="term" value="P:cellular response to bile acid"/>
    <property type="evidence" value="ECO:0000314"/>
    <property type="project" value="RGD"/>
</dbReference>
<dbReference type="GO" id="GO:0071361">
    <property type="term" value="P:cellular response to ethanol"/>
    <property type="evidence" value="ECO:0000314"/>
    <property type="project" value="RGD"/>
</dbReference>
<dbReference type="GO" id="GO:0071456">
    <property type="term" value="P:cellular response to hypoxia"/>
    <property type="evidence" value="ECO:0000270"/>
    <property type="project" value="RGD"/>
</dbReference>
<dbReference type="GO" id="GO:0005513">
    <property type="term" value="P:detection of calcium ion"/>
    <property type="evidence" value="ECO:0000318"/>
    <property type="project" value="GO_Central"/>
</dbReference>
<dbReference type="GO" id="GO:1901381">
    <property type="term" value="P:positive regulation of potassium ion transmembrane transport"/>
    <property type="evidence" value="ECO:0000314"/>
    <property type="project" value="RGD"/>
</dbReference>
<dbReference type="GO" id="GO:0051592">
    <property type="term" value="P:response to calcium ion"/>
    <property type="evidence" value="ECO:0000314"/>
    <property type="project" value="RGD"/>
</dbReference>
<dbReference type="GO" id="GO:0042311">
    <property type="term" value="P:vasodilation"/>
    <property type="evidence" value="ECO:0000314"/>
    <property type="project" value="RGD"/>
</dbReference>
<dbReference type="InterPro" id="IPR003930">
    <property type="entry name" value="K_chnl_Ca-activ_BK_bsu"/>
</dbReference>
<dbReference type="PANTHER" id="PTHR10258">
    <property type="entry name" value="CALCIUM-ACTIVATED POTASSIUM CHANNEL SUBUNIT BETA"/>
    <property type="match status" value="1"/>
</dbReference>
<dbReference type="PANTHER" id="PTHR10258:SF1">
    <property type="entry name" value="CALCIUM-ACTIVATED POTASSIUM CHANNEL SUBUNIT BETA-1"/>
    <property type="match status" value="1"/>
</dbReference>
<dbReference type="Pfam" id="PF03185">
    <property type="entry name" value="CaKB"/>
    <property type="match status" value="1"/>
</dbReference>
<dbReference type="PRINTS" id="PR01450">
    <property type="entry name" value="BKCHANNELB"/>
</dbReference>
<accession>P97678</accession>
<accession>O35337</accession>
<accession>O88805</accession>
<accession>Q9ESK7</accession>
<accession>Q9QWI7</accession>
<organism>
    <name type="scientific">Rattus norvegicus</name>
    <name type="common">Rat</name>
    <dbReference type="NCBI Taxonomy" id="10116"/>
    <lineage>
        <taxon>Eukaryota</taxon>
        <taxon>Metazoa</taxon>
        <taxon>Chordata</taxon>
        <taxon>Craniata</taxon>
        <taxon>Vertebrata</taxon>
        <taxon>Euteleostomi</taxon>
        <taxon>Mammalia</taxon>
        <taxon>Eutheria</taxon>
        <taxon>Euarchontoglires</taxon>
        <taxon>Glires</taxon>
        <taxon>Rodentia</taxon>
        <taxon>Myomorpha</taxon>
        <taxon>Muroidea</taxon>
        <taxon>Muridae</taxon>
        <taxon>Murinae</taxon>
        <taxon>Rattus</taxon>
    </lineage>
</organism>
<keyword id="KW-0025">Alternative splicing</keyword>
<keyword id="KW-0325">Glycoprotein</keyword>
<keyword id="KW-0407">Ion channel</keyword>
<keyword id="KW-0406">Ion transport</keyword>
<keyword id="KW-0472">Membrane</keyword>
<keyword id="KW-1185">Reference proteome</keyword>
<keyword id="KW-0812">Transmembrane</keyword>
<keyword id="KW-1133">Transmembrane helix</keyword>
<keyword id="KW-0813">Transport</keyword>
<name>KCMB1_RAT</name>
<gene>
    <name type="primary">Kcnmb1</name>
</gene>
<comment type="function">
    <text evidence="1">Regulatory subunit of the calcium activated potassium KCNMA1 (maxiK) channel. Modulates the calcium sensitivity and gating kinetics of KCNMA1, thereby contributing to KCNMA1 channel diversity. Increases the apparent Ca(2+)/voltage sensitivity of the KCNMA1 channel. It also modifies KCNMA1 channel kinetics and alters its pharmacological properties. It slows down the activation and the deactivation kinetics of the channel. Acts as a negative regulator of smooth muscle contraction by enhancing the calcium sensitivity to KCNMA1. Its presence is also a requirement for internal binding of the KCNMA1 channel opener dehydrosoyasaponin I (DHS-1) triterpene glycoside and for external binding of the agonist hormone 17-beta-estradiol (E2). Increases the binding activity of charybdotoxin (CTX) toxin to KCNMA1 peptide blocker by increasing the CTX association rate and decreasing the dissociation rate (By similarity).</text>
</comment>
<comment type="subunit">
    <text evidence="1">Interacts with KCNMA1 tetramer. There are probably 4 molecules of KCMNB1 per KCNMA1 tetramer (By similarity).</text>
</comment>
<comment type="subcellular location">
    <subcellularLocation>
        <location>Membrane</location>
        <topology>Multi-pass membrane protein</topology>
    </subcellularLocation>
</comment>
<comment type="alternative products">
    <event type="alternative splicing"/>
    <isoform>
        <id>P97678-1</id>
        <name>1</name>
        <sequence type="displayed"/>
    </isoform>
    <isoform>
        <id>P97678-2</id>
        <name>2</name>
        <name>1b</name>
        <sequence type="described" ref="VSP_009825 VSP_009826"/>
    </isoform>
    <isoform>
        <id>P97678-3</id>
        <name>3</name>
        <name>1c</name>
        <sequence type="described" ref="VSP_009824 VSP_009825 VSP_009826"/>
    </isoform>
</comment>
<comment type="tissue specificity">
    <text evidence="3">Weakly expressed. In brain, it is expressed in a few discrete populations of neurons that also express KCNMA1.</text>
</comment>
<comment type="PTM">
    <text evidence="1">N-glycosylated.</text>
</comment>
<comment type="similarity">
    <text evidence="5">Belongs to the KCNMB (TC 8.A.14.1) family. KCNMB1 subfamily.</text>
</comment>
<reference key="1">
    <citation type="journal article" date="1997" name="Brain Res. Mol. Brain Res.">
        <title>Differential expression of the alpha and beta subunits of the large-conductance calcium-activated potassium channel: implication for channel diversity.</title>
        <authorList>
            <person name="Chang C.-P."/>
            <person name="Dworetzky S.I."/>
            <person name="Wang J."/>
            <person name="Goldstein M.E."/>
        </authorList>
    </citation>
    <scope>NUCLEOTIDE SEQUENCE [MRNA] (ISOFORM 1)</scope>
    <scope>TISSUE SPECIFICITY</scope>
    <source>
        <strain>Sprague-Dawley</strain>
    </source>
</reference>
<reference key="2">
    <citation type="journal article" date="1999" name="Genomics">
        <title>Human and rodent MaxiK channel beta-subunit genes: cloning and characterization.</title>
        <authorList>
            <person name="Jiang Z."/>
            <person name="Wallner M."/>
            <person name="Meera P."/>
            <person name="Toro L."/>
        </authorList>
    </citation>
    <scope>NUCLEOTIDE SEQUENCE [MRNA] (ISOFORM 1)</scope>
    <source>
        <strain>Sprague-Dawley</strain>
        <tissue>Uterus</tissue>
    </source>
</reference>
<reference key="3">
    <citation type="submission" date="1996-12" db="EMBL/GenBank/DDBJ databases">
        <authorList>
            <person name="Lange A.R."/>
            <person name="Gebremedhin D."/>
            <person name="Aebly M."/>
            <person name="Harder D.R."/>
        </authorList>
    </citation>
    <scope>NUCLEOTIDE SEQUENCE [MRNA] (ISOFORM 1)</scope>
    <source>
        <strain>Sprague-Dawley</strain>
        <tissue>Vascular smooth muscle</tissue>
    </source>
</reference>
<reference key="4">
    <citation type="submission" date="1995-11" db="EMBL/GenBank/DDBJ databases">
        <authorList>
            <person name="Reimann F."/>
        </authorList>
    </citation>
    <scope>NUCLEOTIDE SEQUENCE [MRNA] (ISOFORM 1)</scope>
    <source>
        <strain>Sprague-Dawley</strain>
        <tissue>Uterus</tissue>
    </source>
</reference>
<reference key="5">
    <citation type="submission" date="1998-02" db="EMBL/GenBank/DDBJ databases">
        <title>Molecular cloning of a novel spliced variant of calcium activated potassium channel beta subunit in rat smooth muscle.</title>
        <authorList>
            <person name="Ohya S."/>
            <person name="Watanabe M."/>
            <person name="Imaizumi Y."/>
        </authorList>
    </citation>
    <scope>NUCLEOTIDE SEQUENCE [MRNA] (ISOFORMS 2 AND 3)</scope>
    <source>
        <tissue>Aorta</tissue>
    </source>
</reference>
<sequence>MGKKLVMAQKRGETRALCLGVAMVVCAAITYYILGTTVLPLYQKSVWTQESTCHLVETNIKDQEELEGRKVPQYPCLWVNVSAVGRWAMLYHTEDTRDQNQQCSYIPRNLDNYQTALVDVKKVRANFYKHHNFYCFSAPQVNETSVVYQRLYGPQILLFSFFWPTFLLTGGLLIIAMVKLNRSLSVLAAQK</sequence>
<protein>
    <recommendedName>
        <fullName>Calcium-activated potassium channel subunit beta-1</fullName>
    </recommendedName>
    <alternativeName>
        <fullName>BK channel subunit beta-1</fullName>
        <shortName>BKbeta</shortName>
        <shortName>BKbeta1</shortName>
    </alternativeName>
    <alternativeName>
        <fullName>Calcium-activated potassium channel, subfamily M subunit beta-1</fullName>
        <shortName>Calcium-activated potassium channel subunit beta</shortName>
    </alternativeName>
    <alternativeName>
        <fullName>Charybdotoxin receptor subunit beta-1</fullName>
    </alternativeName>
    <alternativeName>
        <fullName>K(VCA)beta-1</fullName>
    </alternativeName>
    <alternativeName>
        <fullName>Maxi K channel subunit beta-1</fullName>
    </alternativeName>
    <alternativeName>
        <fullName>Slo-beta-1</fullName>
        <shortName>Slo-beta</shortName>
    </alternativeName>
    <alternativeName>
        <fullName>Slowpoke-beta</fullName>
    </alternativeName>
</protein>
<evidence type="ECO:0000250" key="1"/>
<evidence type="ECO:0000255" key="2"/>
<evidence type="ECO:0000269" key="3">
    <source>
    </source>
</evidence>
<evidence type="ECO:0000303" key="4">
    <source ref="5"/>
</evidence>
<evidence type="ECO:0000305" key="5"/>